<gene>
    <name evidence="1" type="primary">atpF</name>
    <name type="ordered locus">Ent638_4128</name>
</gene>
<organism>
    <name type="scientific">Enterobacter sp. (strain 638)</name>
    <dbReference type="NCBI Taxonomy" id="399742"/>
    <lineage>
        <taxon>Bacteria</taxon>
        <taxon>Pseudomonadati</taxon>
        <taxon>Pseudomonadota</taxon>
        <taxon>Gammaproteobacteria</taxon>
        <taxon>Enterobacterales</taxon>
        <taxon>Enterobacteriaceae</taxon>
        <taxon>Enterobacter</taxon>
    </lineage>
</organism>
<reference key="1">
    <citation type="journal article" date="2010" name="PLoS Genet.">
        <title>Genome sequence of the plant growth promoting endophytic bacterium Enterobacter sp. 638.</title>
        <authorList>
            <person name="Taghavi S."/>
            <person name="van der Lelie D."/>
            <person name="Hoffman A."/>
            <person name="Zhang Y.B."/>
            <person name="Walla M.D."/>
            <person name="Vangronsveld J."/>
            <person name="Newman L."/>
            <person name="Monchy S."/>
        </authorList>
    </citation>
    <scope>NUCLEOTIDE SEQUENCE [LARGE SCALE GENOMIC DNA]</scope>
    <source>
        <strain>638</strain>
    </source>
</reference>
<accession>A4WGF1</accession>
<evidence type="ECO:0000255" key="1">
    <source>
        <dbReference type="HAMAP-Rule" id="MF_01398"/>
    </source>
</evidence>
<keyword id="KW-0066">ATP synthesis</keyword>
<keyword id="KW-0997">Cell inner membrane</keyword>
<keyword id="KW-1003">Cell membrane</keyword>
<keyword id="KW-0138">CF(0)</keyword>
<keyword id="KW-0375">Hydrogen ion transport</keyword>
<keyword id="KW-0406">Ion transport</keyword>
<keyword id="KW-0472">Membrane</keyword>
<keyword id="KW-0812">Transmembrane</keyword>
<keyword id="KW-1133">Transmembrane helix</keyword>
<keyword id="KW-0813">Transport</keyword>
<dbReference type="EMBL" id="CP000653">
    <property type="protein sequence ID" value="ABP62781.1"/>
    <property type="molecule type" value="Genomic_DNA"/>
</dbReference>
<dbReference type="RefSeq" id="WP_015961084.1">
    <property type="nucleotide sequence ID" value="NC_009436.1"/>
</dbReference>
<dbReference type="SMR" id="A4WGF1"/>
<dbReference type="STRING" id="399742.Ent638_4128"/>
<dbReference type="GeneID" id="97604085"/>
<dbReference type="KEGG" id="ent:Ent638_4128"/>
<dbReference type="eggNOG" id="COG0711">
    <property type="taxonomic scope" value="Bacteria"/>
</dbReference>
<dbReference type="HOGENOM" id="CLU_079215_4_5_6"/>
<dbReference type="OrthoDB" id="9788020at2"/>
<dbReference type="Proteomes" id="UP000000230">
    <property type="component" value="Chromosome"/>
</dbReference>
<dbReference type="GO" id="GO:0005886">
    <property type="term" value="C:plasma membrane"/>
    <property type="evidence" value="ECO:0007669"/>
    <property type="project" value="UniProtKB-SubCell"/>
</dbReference>
<dbReference type="GO" id="GO:0045259">
    <property type="term" value="C:proton-transporting ATP synthase complex"/>
    <property type="evidence" value="ECO:0007669"/>
    <property type="project" value="UniProtKB-KW"/>
</dbReference>
<dbReference type="GO" id="GO:0046933">
    <property type="term" value="F:proton-transporting ATP synthase activity, rotational mechanism"/>
    <property type="evidence" value="ECO:0007669"/>
    <property type="project" value="UniProtKB-UniRule"/>
</dbReference>
<dbReference type="GO" id="GO:0046961">
    <property type="term" value="F:proton-transporting ATPase activity, rotational mechanism"/>
    <property type="evidence" value="ECO:0007669"/>
    <property type="project" value="TreeGrafter"/>
</dbReference>
<dbReference type="CDD" id="cd06503">
    <property type="entry name" value="ATP-synt_Fo_b"/>
    <property type="match status" value="1"/>
</dbReference>
<dbReference type="Gene3D" id="6.10.250.1580">
    <property type="match status" value="1"/>
</dbReference>
<dbReference type="HAMAP" id="MF_01398">
    <property type="entry name" value="ATP_synth_b_bprime"/>
    <property type="match status" value="1"/>
</dbReference>
<dbReference type="InterPro" id="IPR028987">
    <property type="entry name" value="ATP_synth_B-like_membr_sf"/>
</dbReference>
<dbReference type="InterPro" id="IPR002146">
    <property type="entry name" value="ATP_synth_b/b'su_bac/chlpt"/>
</dbReference>
<dbReference type="InterPro" id="IPR005864">
    <property type="entry name" value="ATP_synth_F0_bsu_bac"/>
</dbReference>
<dbReference type="InterPro" id="IPR050059">
    <property type="entry name" value="ATP_synthase_B_chain"/>
</dbReference>
<dbReference type="NCBIfam" id="TIGR01144">
    <property type="entry name" value="ATP_synt_b"/>
    <property type="match status" value="1"/>
</dbReference>
<dbReference type="NCBIfam" id="NF004411">
    <property type="entry name" value="PRK05759.1-2"/>
    <property type="match status" value="1"/>
</dbReference>
<dbReference type="NCBIfam" id="NF004413">
    <property type="entry name" value="PRK05759.1-4"/>
    <property type="match status" value="1"/>
</dbReference>
<dbReference type="PANTHER" id="PTHR33445:SF1">
    <property type="entry name" value="ATP SYNTHASE SUBUNIT B"/>
    <property type="match status" value="1"/>
</dbReference>
<dbReference type="PANTHER" id="PTHR33445">
    <property type="entry name" value="ATP SYNTHASE SUBUNIT B', CHLOROPLASTIC"/>
    <property type="match status" value="1"/>
</dbReference>
<dbReference type="Pfam" id="PF00430">
    <property type="entry name" value="ATP-synt_B"/>
    <property type="match status" value="1"/>
</dbReference>
<dbReference type="SUPFAM" id="SSF81573">
    <property type="entry name" value="F1F0 ATP synthase subunit B, membrane domain"/>
    <property type="match status" value="1"/>
</dbReference>
<feature type="chain" id="PRO_0000368468" description="ATP synthase subunit b">
    <location>
        <begin position="1"/>
        <end position="156"/>
    </location>
</feature>
<feature type="transmembrane region" description="Helical" evidence="1">
    <location>
        <begin position="11"/>
        <end position="31"/>
    </location>
</feature>
<proteinExistence type="inferred from homology"/>
<protein>
    <recommendedName>
        <fullName evidence="1">ATP synthase subunit b</fullName>
    </recommendedName>
    <alternativeName>
        <fullName evidence="1">ATP synthase F(0) sector subunit b</fullName>
    </alternativeName>
    <alternativeName>
        <fullName evidence="1">ATPase subunit I</fullName>
    </alternativeName>
    <alternativeName>
        <fullName evidence="1">F-type ATPase subunit b</fullName>
        <shortName evidence="1">F-ATPase subunit b</shortName>
    </alternativeName>
</protein>
<name>ATPF_ENT38</name>
<comment type="function">
    <text evidence="1">F(1)F(0) ATP synthase produces ATP from ADP in the presence of a proton or sodium gradient. F-type ATPases consist of two structural domains, F(1) containing the extramembraneous catalytic core and F(0) containing the membrane proton channel, linked together by a central stalk and a peripheral stalk. During catalysis, ATP synthesis in the catalytic domain of F(1) is coupled via a rotary mechanism of the central stalk subunits to proton translocation.</text>
</comment>
<comment type="function">
    <text evidence="1">Component of the F(0) channel, it forms part of the peripheral stalk, linking F(1) to F(0).</text>
</comment>
<comment type="subunit">
    <text evidence="1">F-type ATPases have 2 components, F(1) - the catalytic core - and F(0) - the membrane proton channel. F(1) has five subunits: alpha(3), beta(3), gamma(1), delta(1), epsilon(1). F(0) has three main subunits: a(1), b(2) and c(10-14). The alpha and beta chains form an alternating ring which encloses part of the gamma chain. F(1) is attached to F(0) by a central stalk formed by the gamma and epsilon chains, while a peripheral stalk is formed by the delta and b chains.</text>
</comment>
<comment type="subcellular location">
    <subcellularLocation>
        <location evidence="1">Cell inner membrane</location>
        <topology evidence="1">Single-pass membrane protein</topology>
    </subcellularLocation>
</comment>
<comment type="similarity">
    <text evidence="1">Belongs to the ATPase B chain family.</text>
</comment>
<sequence>MNMNATILGQAIAFILFVWFCMKYVWPPLMAAIEKRQKEIADGLASAERAKKDLDLAQANATDQLKKAKAEAQVIIEQANKRRSQILDEAKAEAEQERTKIVAQAQAEIDAERKRAREELRKQVAILAVAGAEKIIERSVDEAANSDIVDKLVAEL</sequence>